<dbReference type="EMBL" id="X79275">
    <property type="protein sequence ID" value="CAA55862.1"/>
    <property type="molecule type" value="mRNA"/>
</dbReference>
<dbReference type="PIR" id="T07370">
    <property type="entry name" value="T07370"/>
</dbReference>
<dbReference type="SMR" id="P46269"/>
<dbReference type="FunCoup" id="P46269">
    <property type="interactions" value="1467"/>
</dbReference>
<dbReference type="STRING" id="4113.P46269"/>
<dbReference type="PaxDb" id="4113-PGSC0003DMT400078304"/>
<dbReference type="eggNOG" id="ENOG502S4G5">
    <property type="taxonomic scope" value="Eukaryota"/>
</dbReference>
<dbReference type="InParanoid" id="P46269"/>
<dbReference type="Proteomes" id="UP000011115">
    <property type="component" value="Unassembled WGS sequence"/>
</dbReference>
<dbReference type="ExpressionAtlas" id="P46269">
    <property type="expression patterns" value="baseline"/>
</dbReference>
<dbReference type="GO" id="GO:0005743">
    <property type="term" value="C:mitochondrial inner membrane"/>
    <property type="evidence" value="ECO:0007669"/>
    <property type="project" value="UniProtKB-SubCell"/>
</dbReference>
<dbReference type="GO" id="GO:0045275">
    <property type="term" value="C:respiratory chain complex III"/>
    <property type="evidence" value="ECO:0007669"/>
    <property type="project" value="InterPro"/>
</dbReference>
<dbReference type="GO" id="GO:0006122">
    <property type="term" value="P:mitochondrial electron transport, ubiquinol to cytochrome c"/>
    <property type="evidence" value="ECO:0007669"/>
    <property type="project" value="InterPro"/>
</dbReference>
<dbReference type="Gene3D" id="1.20.5.210">
    <property type="entry name" value="Cytochrome b-c1 complex subunit 8"/>
    <property type="match status" value="1"/>
</dbReference>
<dbReference type="InterPro" id="IPR020101">
    <property type="entry name" value="Cyt_b-c1_8-plants"/>
</dbReference>
<dbReference type="InterPro" id="IPR036642">
    <property type="entry name" value="Cyt_bc1_su8_sf"/>
</dbReference>
<dbReference type="PANTHER" id="PTHR34559">
    <property type="entry name" value="CYTOCHROME B-C1 COMPLEX SUBUNIT 8"/>
    <property type="match status" value="1"/>
</dbReference>
<dbReference type="PANTHER" id="PTHR34559:SF6">
    <property type="entry name" value="CYTOCHROME B-C1 COMPLEX SUBUNIT 8-1, MITOCHONDRIAL"/>
    <property type="match status" value="1"/>
</dbReference>
<dbReference type="Pfam" id="PF10890">
    <property type="entry name" value="Cyt_b-c1_8"/>
    <property type="match status" value="1"/>
</dbReference>
<dbReference type="SUPFAM" id="SSF81508">
    <property type="entry name" value="Ubiquinone-binding protein QP-C of cytochrome bc1 complex (Ubiquinol-cytochrome c reductase)"/>
    <property type="match status" value="1"/>
</dbReference>
<protein>
    <recommendedName>
        <fullName>Cytochrome b-c1 complex subunit 8</fullName>
    </recommendedName>
    <alternativeName>
        <fullName>Complex III subunit 8</fullName>
    </alternativeName>
    <alternativeName>
        <fullName>Complex III subunit VII</fullName>
    </alternativeName>
    <alternativeName>
        <fullName>Ubiquinol-cytochrome c reductase complex 8.2 kDa protein</fullName>
    </alternativeName>
    <alternativeName>
        <fullName>Ubiquinol-cytochrome c reductase complex ubiquinone-binding protein QP-C</fullName>
    </alternativeName>
</protein>
<feature type="initiator methionine" description="Removed" evidence="3">
    <location>
        <position position="1"/>
    </location>
</feature>
<feature type="chain" id="PRO_0000193548" description="Cytochrome b-c1 complex subunit 8">
    <location>
        <begin position="2"/>
        <end position="72"/>
    </location>
</feature>
<feature type="topological domain" description="Mitochondrial matrix" evidence="1">
    <location>
        <begin position="2"/>
        <end position="41"/>
    </location>
</feature>
<feature type="transmembrane region" description="Helical" evidence="2">
    <location>
        <begin position="42"/>
        <end position="59"/>
    </location>
</feature>
<feature type="topological domain" description="Mitochondrial intermembrane" evidence="1">
    <location>
        <begin position="60"/>
        <end position="72"/>
    </location>
</feature>
<feature type="sequence conflict" description="In Ref. 2; AA sequence." evidence="4" ref="2">
    <original>I</original>
    <variation>L</variation>
    <location>
        <position position="15"/>
    </location>
</feature>
<evidence type="ECO:0000250" key="1">
    <source>
        <dbReference type="UniProtKB" id="P08525"/>
    </source>
</evidence>
<evidence type="ECO:0000255" key="2"/>
<evidence type="ECO:0000269" key="3">
    <source>
    </source>
</evidence>
<evidence type="ECO:0000305" key="4"/>
<comment type="function">
    <text evidence="1">Component of the ubiquinol-cytochrome c oxidoreductase, a multisubunit transmembrane complex that is part of the mitochondrial electron transport chain which drives oxidative phosphorylation. The respiratory chain contains 3 multisubunit complexes succinate dehydrogenase (complex II, CII), ubiquinol-cytochrome c oxidoreductase (cytochrome b-c1 complex, complex III, CIII) and cytochrome c oxidase (complex IV, CIV), that cooperate to transfer electrons derived from NADH and succinate to molecular oxygen, creating an electrochemical gradient over the inner membrane that drives transmembrane transport and the ATP synthase. The cytochrome b-c1 complex catalyzes electron transfer from ubiquinol to cytochrome c, linking this redox reaction to translocation of protons across the mitochondrial inner membrane, with protons being carried across the membrane as hydrogens on the quinol. In the process called Q cycle, 2 protons are consumed from the matrix, 4 protons are released into the intermembrane space and 2 electrons are passed to cytochrome c.</text>
</comment>
<comment type="subunit">
    <text evidence="1">Component of the ubiquinol-cytochrome c oxidoreductase (cytochrome b-c1 complex, complex III, CIII), a multisubunit enzyme composed of 3 respiratory subunits cytochrome b, cytochrome c1 and Rieske protein, 2 core protein subunits, and additional low-molecular weight protein subunits. The complex exists as an obligatory dimer and forms supercomplexes (SCs) in the inner mitochondrial membrane with cytochrome c oxidase (complex IV, CIV).</text>
</comment>
<comment type="subcellular location">
    <subcellularLocation>
        <location evidence="1">Mitochondrion inner membrane</location>
        <topology evidence="1">Single-pass membrane protein</topology>
    </subcellularLocation>
</comment>
<comment type="similarity">
    <text evidence="4">Belongs to the UQCRQ/QCR8 family.</text>
</comment>
<sequence length="72" mass="8317">MGKQPVKLKAVVYAISPFQQKIMPGLWKDLPGKIHHKVSENWISATLLLGPLVGTYSYVQHFLEKEKLEHRY</sequence>
<organism>
    <name type="scientific">Solanum tuberosum</name>
    <name type="common">Potato</name>
    <dbReference type="NCBI Taxonomy" id="4113"/>
    <lineage>
        <taxon>Eukaryota</taxon>
        <taxon>Viridiplantae</taxon>
        <taxon>Streptophyta</taxon>
        <taxon>Embryophyta</taxon>
        <taxon>Tracheophyta</taxon>
        <taxon>Spermatophyta</taxon>
        <taxon>Magnoliopsida</taxon>
        <taxon>eudicotyledons</taxon>
        <taxon>Gunneridae</taxon>
        <taxon>Pentapetalae</taxon>
        <taxon>asterids</taxon>
        <taxon>lamiids</taxon>
        <taxon>Solanales</taxon>
        <taxon>Solanaceae</taxon>
        <taxon>Solanoideae</taxon>
        <taxon>Solaneae</taxon>
        <taxon>Solanum</taxon>
    </lineage>
</organism>
<keyword id="KW-0903">Direct protein sequencing</keyword>
<keyword id="KW-0249">Electron transport</keyword>
<keyword id="KW-0472">Membrane</keyword>
<keyword id="KW-0496">Mitochondrion</keyword>
<keyword id="KW-0999">Mitochondrion inner membrane</keyword>
<keyword id="KW-1185">Reference proteome</keyword>
<keyword id="KW-0679">Respiratory chain</keyword>
<keyword id="KW-0812">Transmembrane</keyword>
<keyword id="KW-1133">Transmembrane helix</keyword>
<keyword id="KW-0813">Transport</keyword>
<reference key="1">
    <citation type="journal article" date="1994" name="Biochim. Biophys. Acta">
        <title>Primary structure, cell-free synthesis and mitochondrial targeting of the 8.2 kDa protein of cytochrome c reductase from potato.</title>
        <authorList>
            <person name="Braun H.-P."/>
            <person name="Kruft V."/>
            <person name="Schmitz U.K."/>
        </authorList>
    </citation>
    <scope>NUCLEOTIDE SEQUENCE [MRNA]</scope>
    <scope>PROTEIN SEQUENCE OF 2-28</scope>
    <source>
        <strain>cv. Bintje</strain>
        <tissue>Tuber</tissue>
    </source>
</reference>
<reference key="2">
    <citation type="journal article" date="1994" name="Planta">
        <title>Molecular identification of the ten subunits of cytochrome-c reductase from potato mitochondria.</title>
        <authorList>
            <person name="Braun H.-P."/>
            <person name="Kruft V."/>
            <person name="Schmitz U.K."/>
        </authorList>
    </citation>
    <scope>PROTEIN SEQUENCE OF 9-28 AND 67-72</scope>
    <source>
        <strain>cv. Hansa</strain>
        <tissue>Tuber</tissue>
    </source>
</reference>
<accession>P46269</accession>
<proteinExistence type="evidence at protein level"/>
<name>QCR8_SOLTU</name>